<evidence type="ECO:0000255" key="1">
    <source>
        <dbReference type="HAMAP-Rule" id="MF_01337"/>
    </source>
</evidence>
<evidence type="ECO:0000305" key="2"/>
<gene>
    <name evidence="1" type="primary">rplR</name>
    <name type="ordered locus">ACP_1435</name>
</gene>
<reference key="1">
    <citation type="journal article" date="2009" name="Appl. Environ. Microbiol.">
        <title>Three genomes from the phylum Acidobacteria provide insight into the lifestyles of these microorganisms in soils.</title>
        <authorList>
            <person name="Ward N.L."/>
            <person name="Challacombe J.F."/>
            <person name="Janssen P.H."/>
            <person name="Henrissat B."/>
            <person name="Coutinho P.M."/>
            <person name="Wu M."/>
            <person name="Xie G."/>
            <person name="Haft D.H."/>
            <person name="Sait M."/>
            <person name="Badger J."/>
            <person name="Barabote R.D."/>
            <person name="Bradley B."/>
            <person name="Brettin T.S."/>
            <person name="Brinkac L.M."/>
            <person name="Bruce D."/>
            <person name="Creasy T."/>
            <person name="Daugherty S.C."/>
            <person name="Davidsen T.M."/>
            <person name="DeBoy R.T."/>
            <person name="Detter J.C."/>
            <person name="Dodson R.J."/>
            <person name="Durkin A.S."/>
            <person name="Ganapathy A."/>
            <person name="Gwinn-Giglio M."/>
            <person name="Han C.S."/>
            <person name="Khouri H."/>
            <person name="Kiss H."/>
            <person name="Kothari S.P."/>
            <person name="Madupu R."/>
            <person name="Nelson K.E."/>
            <person name="Nelson W.C."/>
            <person name="Paulsen I."/>
            <person name="Penn K."/>
            <person name="Ren Q."/>
            <person name="Rosovitz M.J."/>
            <person name="Selengut J.D."/>
            <person name="Shrivastava S."/>
            <person name="Sullivan S.A."/>
            <person name="Tapia R."/>
            <person name="Thompson L.S."/>
            <person name="Watkins K.L."/>
            <person name="Yang Q."/>
            <person name="Yu C."/>
            <person name="Zafar N."/>
            <person name="Zhou L."/>
            <person name="Kuske C.R."/>
        </authorList>
    </citation>
    <scope>NUCLEOTIDE SEQUENCE [LARGE SCALE GENOMIC DNA]</scope>
    <source>
        <strain>ATCC 51196 / DSM 11244 / BCRC 80197 / JCM 7670 / NBRC 15755 / NCIMB 13165 / 161</strain>
    </source>
</reference>
<dbReference type="EMBL" id="CP001472">
    <property type="protein sequence ID" value="ACO32129.1"/>
    <property type="molecule type" value="Genomic_DNA"/>
</dbReference>
<dbReference type="RefSeq" id="WP_015896568.1">
    <property type="nucleotide sequence ID" value="NC_012483.1"/>
</dbReference>
<dbReference type="SMR" id="C1F626"/>
<dbReference type="FunCoup" id="C1F626">
    <property type="interactions" value="610"/>
</dbReference>
<dbReference type="STRING" id="240015.ACP_1435"/>
<dbReference type="KEGG" id="aca:ACP_1435"/>
<dbReference type="eggNOG" id="COG0256">
    <property type="taxonomic scope" value="Bacteria"/>
</dbReference>
<dbReference type="HOGENOM" id="CLU_098841_0_1_0"/>
<dbReference type="InParanoid" id="C1F626"/>
<dbReference type="OrthoDB" id="9810939at2"/>
<dbReference type="Proteomes" id="UP000002207">
    <property type="component" value="Chromosome"/>
</dbReference>
<dbReference type="GO" id="GO:0022625">
    <property type="term" value="C:cytosolic large ribosomal subunit"/>
    <property type="evidence" value="ECO:0007669"/>
    <property type="project" value="TreeGrafter"/>
</dbReference>
<dbReference type="GO" id="GO:0008097">
    <property type="term" value="F:5S rRNA binding"/>
    <property type="evidence" value="ECO:0007669"/>
    <property type="project" value="TreeGrafter"/>
</dbReference>
<dbReference type="GO" id="GO:0003735">
    <property type="term" value="F:structural constituent of ribosome"/>
    <property type="evidence" value="ECO:0007669"/>
    <property type="project" value="InterPro"/>
</dbReference>
<dbReference type="GO" id="GO:0006412">
    <property type="term" value="P:translation"/>
    <property type="evidence" value="ECO:0007669"/>
    <property type="project" value="UniProtKB-UniRule"/>
</dbReference>
<dbReference type="CDD" id="cd00432">
    <property type="entry name" value="Ribosomal_L18_L5e"/>
    <property type="match status" value="1"/>
</dbReference>
<dbReference type="FunFam" id="3.30.420.100:FF:000001">
    <property type="entry name" value="50S ribosomal protein L18"/>
    <property type="match status" value="1"/>
</dbReference>
<dbReference type="Gene3D" id="3.30.420.100">
    <property type="match status" value="1"/>
</dbReference>
<dbReference type="HAMAP" id="MF_01337_B">
    <property type="entry name" value="Ribosomal_uL18_B"/>
    <property type="match status" value="1"/>
</dbReference>
<dbReference type="InterPro" id="IPR004389">
    <property type="entry name" value="Ribosomal_uL18_bac-type"/>
</dbReference>
<dbReference type="InterPro" id="IPR005484">
    <property type="entry name" value="Ribosomal_uL18_bac/euk"/>
</dbReference>
<dbReference type="NCBIfam" id="TIGR00060">
    <property type="entry name" value="L18_bact"/>
    <property type="match status" value="1"/>
</dbReference>
<dbReference type="PANTHER" id="PTHR12899">
    <property type="entry name" value="39S RIBOSOMAL PROTEIN L18, MITOCHONDRIAL"/>
    <property type="match status" value="1"/>
</dbReference>
<dbReference type="PANTHER" id="PTHR12899:SF3">
    <property type="entry name" value="LARGE RIBOSOMAL SUBUNIT PROTEIN UL18M"/>
    <property type="match status" value="1"/>
</dbReference>
<dbReference type="Pfam" id="PF00861">
    <property type="entry name" value="Ribosomal_L18p"/>
    <property type="match status" value="1"/>
</dbReference>
<dbReference type="SUPFAM" id="SSF53137">
    <property type="entry name" value="Translational machinery components"/>
    <property type="match status" value="1"/>
</dbReference>
<organism>
    <name type="scientific">Acidobacterium capsulatum (strain ATCC 51196 / DSM 11244 / BCRC 80197 / JCM 7670 / NBRC 15755 / NCIMB 13165 / 161)</name>
    <dbReference type="NCBI Taxonomy" id="240015"/>
    <lineage>
        <taxon>Bacteria</taxon>
        <taxon>Pseudomonadati</taxon>
        <taxon>Acidobacteriota</taxon>
        <taxon>Terriglobia</taxon>
        <taxon>Terriglobales</taxon>
        <taxon>Acidobacteriaceae</taxon>
        <taxon>Acidobacterium</taxon>
    </lineage>
</organism>
<feature type="chain" id="PRO_1000166198" description="Large ribosomal subunit protein uL18">
    <location>
        <begin position="1"/>
        <end position="118"/>
    </location>
</feature>
<proteinExistence type="inferred from homology"/>
<protein>
    <recommendedName>
        <fullName evidence="1">Large ribosomal subunit protein uL18</fullName>
    </recommendedName>
    <alternativeName>
        <fullName evidence="2">50S ribosomal protein L18</fullName>
    </alternativeName>
</protein>
<keyword id="KW-1185">Reference proteome</keyword>
<keyword id="KW-0687">Ribonucleoprotein</keyword>
<keyword id="KW-0689">Ribosomal protein</keyword>
<keyword id="KW-0694">RNA-binding</keyword>
<keyword id="KW-0699">rRNA-binding</keyword>
<name>RL18_ACIC5</name>
<comment type="function">
    <text evidence="1">This is one of the proteins that bind and probably mediate the attachment of the 5S RNA into the large ribosomal subunit, where it forms part of the central protuberance.</text>
</comment>
<comment type="subunit">
    <text evidence="1">Part of the 50S ribosomal subunit; part of the 5S rRNA/L5/L18/L25 subcomplex. Contacts the 5S and 23S rRNAs.</text>
</comment>
<comment type="similarity">
    <text evidence="1">Belongs to the universal ribosomal protein uL18 family.</text>
</comment>
<sequence>MIPQIQRNVIRQRVHTRIRERIQGTTERPRLNVYRSLNHIYAQIIDDTQGRTLVSASTIADKIKTGGNVAAAKEIGKLVAQRAVDKGIKKVVYDRGGYLYHGRIKALADAAREAGLEF</sequence>
<accession>C1F626</accession>